<reference key="1">
    <citation type="journal article" date="2008" name="PLoS ONE">
        <title>Comparative analysis of Acinetobacters: three genomes for three lifestyles.</title>
        <authorList>
            <person name="Vallenet D."/>
            <person name="Nordmann P."/>
            <person name="Barbe V."/>
            <person name="Poirel L."/>
            <person name="Mangenot S."/>
            <person name="Bataille E."/>
            <person name="Dossat C."/>
            <person name="Gas S."/>
            <person name="Kreimeyer A."/>
            <person name="Lenoble P."/>
            <person name="Oztas S."/>
            <person name="Poulain J."/>
            <person name="Segurens B."/>
            <person name="Robert C."/>
            <person name="Abergel C."/>
            <person name="Claverie J.-M."/>
            <person name="Raoult D."/>
            <person name="Medigue C."/>
            <person name="Weissenbach J."/>
            <person name="Cruveiller S."/>
        </authorList>
    </citation>
    <scope>NUCLEOTIDE SEQUENCE [LARGE SCALE GENOMIC DNA]</scope>
    <source>
        <strain>SDF</strain>
    </source>
</reference>
<comment type="function">
    <text evidence="1">Protein S19 forms a complex with S13 that binds strongly to the 16S ribosomal RNA.</text>
</comment>
<comment type="similarity">
    <text evidence="1">Belongs to the universal ribosomal protein uS19 family.</text>
</comment>
<accession>B0VQS2</accession>
<feature type="chain" id="PRO_1000127915" description="Small ribosomal subunit protein uS19">
    <location>
        <begin position="1"/>
        <end position="91"/>
    </location>
</feature>
<organism>
    <name type="scientific">Acinetobacter baumannii (strain SDF)</name>
    <dbReference type="NCBI Taxonomy" id="509170"/>
    <lineage>
        <taxon>Bacteria</taxon>
        <taxon>Pseudomonadati</taxon>
        <taxon>Pseudomonadota</taxon>
        <taxon>Gammaproteobacteria</taxon>
        <taxon>Moraxellales</taxon>
        <taxon>Moraxellaceae</taxon>
        <taxon>Acinetobacter</taxon>
        <taxon>Acinetobacter calcoaceticus/baumannii complex</taxon>
    </lineage>
</organism>
<evidence type="ECO:0000255" key="1">
    <source>
        <dbReference type="HAMAP-Rule" id="MF_00531"/>
    </source>
</evidence>
<evidence type="ECO:0000305" key="2"/>
<proteinExistence type="inferred from homology"/>
<name>RS19_ACIBS</name>
<protein>
    <recommendedName>
        <fullName evidence="1">Small ribosomal subunit protein uS19</fullName>
    </recommendedName>
    <alternativeName>
        <fullName evidence="2">30S ribosomal protein S19</fullName>
    </alternativeName>
</protein>
<gene>
    <name evidence="1" type="primary">rpsS</name>
    <name type="ordered locus">ABSDF0427</name>
</gene>
<keyword id="KW-0687">Ribonucleoprotein</keyword>
<keyword id="KW-0689">Ribosomal protein</keyword>
<keyword id="KW-0694">RNA-binding</keyword>
<keyword id="KW-0699">rRNA-binding</keyword>
<dbReference type="EMBL" id="CU468230">
    <property type="protein sequence ID" value="CAO99818.1"/>
    <property type="molecule type" value="Genomic_DNA"/>
</dbReference>
<dbReference type="SMR" id="B0VQS2"/>
<dbReference type="KEGG" id="abm:ABSDF0427"/>
<dbReference type="HOGENOM" id="CLU_144911_0_1_6"/>
<dbReference type="Proteomes" id="UP000001741">
    <property type="component" value="Chromosome"/>
</dbReference>
<dbReference type="GO" id="GO:0005737">
    <property type="term" value="C:cytoplasm"/>
    <property type="evidence" value="ECO:0007669"/>
    <property type="project" value="UniProtKB-ARBA"/>
</dbReference>
<dbReference type="GO" id="GO:0015935">
    <property type="term" value="C:small ribosomal subunit"/>
    <property type="evidence" value="ECO:0007669"/>
    <property type="project" value="InterPro"/>
</dbReference>
<dbReference type="GO" id="GO:0019843">
    <property type="term" value="F:rRNA binding"/>
    <property type="evidence" value="ECO:0007669"/>
    <property type="project" value="UniProtKB-UniRule"/>
</dbReference>
<dbReference type="GO" id="GO:0003735">
    <property type="term" value="F:structural constituent of ribosome"/>
    <property type="evidence" value="ECO:0007669"/>
    <property type="project" value="InterPro"/>
</dbReference>
<dbReference type="GO" id="GO:0000028">
    <property type="term" value="P:ribosomal small subunit assembly"/>
    <property type="evidence" value="ECO:0007669"/>
    <property type="project" value="TreeGrafter"/>
</dbReference>
<dbReference type="GO" id="GO:0006412">
    <property type="term" value="P:translation"/>
    <property type="evidence" value="ECO:0007669"/>
    <property type="project" value="UniProtKB-UniRule"/>
</dbReference>
<dbReference type="FunFam" id="3.30.860.10:FF:000001">
    <property type="entry name" value="30S ribosomal protein S19"/>
    <property type="match status" value="1"/>
</dbReference>
<dbReference type="Gene3D" id="3.30.860.10">
    <property type="entry name" value="30s Ribosomal Protein S19, Chain A"/>
    <property type="match status" value="1"/>
</dbReference>
<dbReference type="HAMAP" id="MF_00531">
    <property type="entry name" value="Ribosomal_uS19"/>
    <property type="match status" value="1"/>
</dbReference>
<dbReference type="InterPro" id="IPR002222">
    <property type="entry name" value="Ribosomal_uS19"/>
</dbReference>
<dbReference type="InterPro" id="IPR005732">
    <property type="entry name" value="Ribosomal_uS19_bac-type"/>
</dbReference>
<dbReference type="InterPro" id="IPR020934">
    <property type="entry name" value="Ribosomal_uS19_CS"/>
</dbReference>
<dbReference type="InterPro" id="IPR023575">
    <property type="entry name" value="Ribosomal_uS19_SF"/>
</dbReference>
<dbReference type="NCBIfam" id="TIGR01050">
    <property type="entry name" value="rpsS_bact"/>
    <property type="match status" value="1"/>
</dbReference>
<dbReference type="PANTHER" id="PTHR11880">
    <property type="entry name" value="RIBOSOMAL PROTEIN S19P FAMILY MEMBER"/>
    <property type="match status" value="1"/>
</dbReference>
<dbReference type="PANTHER" id="PTHR11880:SF8">
    <property type="entry name" value="SMALL RIBOSOMAL SUBUNIT PROTEIN US19M"/>
    <property type="match status" value="1"/>
</dbReference>
<dbReference type="Pfam" id="PF00203">
    <property type="entry name" value="Ribosomal_S19"/>
    <property type="match status" value="1"/>
</dbReference>
<dbReference type="PIRSF" id="PIRSF002144">
    <property type="entry name" value="Ribosomal_S19"/>
    <property type="match status" value="1"/>
</dbReference>
<dbReference type="PRINTS" id="PR00975">
    <property type="entry name" value="RIBOSOMALS19"/>
</dbReference>
<dbReference type="SUPFAM" id="SSF54570">
    <property type="entry name" value="Ribosomal protein S19"/>
    <property type="match status" value="1"/>
</dbReference>
<dbReference type="PROSITE" id="PS00323">
    <property type="entry name" value="RIBOSOMAL_S19"/>
    <property type="match status" value="1"/>
</dbReference>
<sequence length="91" mass="10184">MPRSLKKGPFVDAHLFAKVEAAVASNSRKPIKTWSRRSMILPDFVGLTISVHNGRNHVPVIVTEHMVGHKLGEFAPTRTYRGHGVDKKSKR</sequence>